<name>RPOA_SYNS3</name>
<dbReference type="EC" id="2.7.7.6" evidence="1"/>
<dbReference type="EMBL" id="CP000435">
    <property type="protein sequence ID" value="ABI47852.1"/>
    <property type="molecule type" value="Genomic_DNA"/>
</dbReference>
<dbReference type="RefSeq" id="WP_011618381.1">
    <property type="nucleotide sequence ID" value="NC_008319.1"/>
</dbReference>
<dbReference type="SMR" id="Q0ID28"/>
<dbReference type="STRING" id="64471.sync_0414"/>
<dbReference type="KEGG" id="syg:sync_0414"/>
<dbReference type="eggNOG" id="COG0202">
    <property type="taxonomic scope" value="Bacteria"/>
</dbReference>
<dbReference type="HOGENOM" id="CLU_053084_0_1_3"/>
<dbReference type="OrthoDB" id="9805706at2"/>
<dbReference type="Proteomes" id="UP000001961">
    <property type="component" value="Chromosome"/>
</dbReference>
<dbReference type="GO" id="GO:0005737">
    <property type="term" value="C:cytoplasm"/>
    <property type="evidence" value="ECO:0007669"/>
    <property type="project" value="UniProtKB-ARBA"/>
</dbReference>
<dbReference type="GO" id="GO:0000428">
    <property type="term" value="C:DNA-directed RNA polymerase complex"/>
    <property type="evidence" value="ECO:0007669"/>
    <property type="project" value="UniProtKB-KW"/>
</dbReference>
<dbReference type="GO" id="GO:0003677">
    <property type="term" value="F:DNA binding"/>
    <property type="evidence" value="ECO:0007669"/>
    <property type="project" value="UniProtKB-UniRule"/>
</dbReference>
<dbReference type="GO" id="GO:0003899">
    <property type="term" value="F:DNA-directed RNA polymerase activity"/>
    <property type="evidence" value="ECO:0007669"/>
    <property type="project" value="UniProtKB-UniRule"/>
</dbReference>
<dbReference type="GO" id="GO:0046983">
    <property type="term" value="F:protein dimerization activity"/>
    <property type="evidence" value="ECO:0007669"/>
    <property type="project" value="InterPro"/>
</dbReference>
<dbReference type="GO" id="GO:0006351">
    <property type="term" value="P:DNA-templated transcription"/>
    <property type="evidence" value="ECO:0007669"/>
    <property type="project" value="UniProtKB-UniRule"/>
</dbReference>
<dbReference type="CDD" id="cd06928">
    <property type="entry name" value="RNAP_alpha_NTD"/>
    <property type="match status" value="1"/>
</dbReference>
<dbReference type="FunFam" id="2.170.120.12:FF:000001">
    <property type="entry name" value="DNA-directed RNA polymerase subunit alpha"/>
    <property type="match status" value="1"/>
</dbReference>
<dbReference type="Gene3D" id="1.10.150.20">
    <property type="entry name" value="5' to 3' exonuclease, C-terminal subdomain"/>
    <property type="match status" value="1"/>
</dbReference>
<dbReference type="Gene3D" id="2.170.120.12">
    <property type="entry name" value="DNA-directed RNA polymerase, insert domain"/>
    <property type="match status" value="1"/>
</dbReference>
<dbReference type="Gene3D" id="3.30.1360.10">
    <property type="entry name" value="RNA polymerase, RBP11-like subunit"/>
    <property type="match status" value="1"/>
</dbReference>
<dbReference type="HAMAP" id="MF_00059">
    <property type="entry name" value="RNApol_bact_RpoA"/>
    <property type="match status" value="1"/>
</dbReference>
<dbReference type="InterPro" id="IPR011262">
    <property type="entry name" value="DNA-dir_RNA_pol_insert"/>
</dbReference>
<dbReference type="InterPro" id="IPR011263">
    <property type="entry name" value="DNA-dir_RNA_pol_RpoA/D/Rpb3"/>
</dbReference>
<dbReference type="InterPro" id="IPR011773">
    <property type="entry name" value="DNA-dir_RpoA"/>
</dbReference>
<dbReference type="InterPro" id="IPR036603">
    <property type="entry name" value="RBP11-like"/>
</dbReference>
<dbReference type="InterPro" id="IPR011260">
    <property type="entry name" value="RNAP_asu_C"/>
</dbReference>
<dbReference type="InterPro" id="IPR036643">
    <property type="entry name" value="RNApol_insert_sf"/>
</dbReference>
<dbReference type="NCBIfam" id="NF003516">
    <property type="entry name" value="PRK05182.2-2"/>
    <property type="match status" value="1"/>
</dbReference>
<dbReference type="NCBIfam" id="NF003519">
    <property type="entry name" value="PRK05182.2-5"/>
    <property type="match status" value="1"/>
</dbReference>
<dbReference type="NCBIfam" id="TIGR02027">
    <property type="entry name" value="rpoA"/>
    <property type="match status" value="1"/>
</dbReference>
<dbReference type="Pfam" id="PF01000">
    <property type="entry name" value="RNA_pol_A_bac"/>
    <property type="match status" value="1"/>
</dbReference>
<dbReference type="Pfam" id="PF03118">
    <property type="entry name" value="RNA_pol_A_CTD"/>
    <property type="match status" value="1"/>
</dbReference>
<dbReference type="Pfam" id="PF01193">
    <property type="entry name" value="RNA_pol_L"/>
    <property type="match status" value="1"/>
</dbReference>
<dbReference type="SMART" id="SM00662">
    <property type="entry name" value="RPOLD"/>
    <property type="match status" value="1"/>
</dbReference>
<dbReference type="SUPFAM" id="SSF47789">
    <property type="entry name" value="C-terminal domain of RNA polymerase alpha subunit"/>
    <property type="match status" value="1"/>
</dbReference>
<dbReference type="SUPFAM" id="SSF56553">
    <property type="entry name" value="Insert subdomain of RNA polymerase alpha subunit"/>
    <property type="match status" value="1"/>
</dbReference>
<dbReference type="SUPFAM" id="SSF55257">
    <property type="entry name" value="RBP11-like subunits of RNA polymerase"/>
    <property type="match status" value="1"/>
</dbReference>
<comment type="function">
    <text evidence="1">DNA-dependent RNA polymerase catalyzes the transcription of DNA into RNA using the four ribonucleoside triphosphates as substrates.</text>
</comment>
<comment type="catalytic activity">
    <reaction evidence="1">
        <text>RNA(n) + a ribonucleoside 5'-triphosphate = RNA(n+1) + diphosphate</text>
        <dbReference type="Rhea" id="RHEA:21248"/>
        <dbReference type="Rhea" id="RHEA-COMP:14527"/>
        <dbReference type="Rhea" id="RHEA-COMP:17342"/>
        <dbReference type="ChEBI" id="CHEBI:33019"/>
        <dbReference type="ChEBI" id="CHEBI:61557"/>
        <dbReference type="ChEBI" id="CHEBI:140395"/>
        <dbReference type="EC" id="2.7.7.6"/>
    </reaction>
</comment>
<comment type="subunit">
    <text evidence="1">In cyanobacteria the RNAP catalytic core is composed of 2 alpha, 1 beta, 1 beta', 1 gamma and 1 omega subunit. When a sigma factor is associated with the core the holoenzyme is formed, which can initiate transcription.</text>
</comment>
<comment type="domain">
    <text evidence="1">The N-terminal domain is essential for RNAP assembly and basal transcription, whereas the C-terminal domain is involved in interaction with transcriptional regulators and with upstream promoter elements.</text>
</comment>
<comment type="similarity">
    <text evidence="1">Belongs to the RNA polymerase alpha chain family.</text>
</comment>
<protein>
    <recommendedName>
        <fullName evidence="1">DNA-directed RNA polymerase subunit alpha</fullName>
        <shortName evidence="1">RNAP subunit alpha</shortName>
        <ecNumber evidence="1">2.7.7.6</ecNumber>
    </recommendedName>
    <alternativeName>
        <fullName evidence="1">RNA polymerase subunit alpha</fullName>
    </alternativeName>
    <alternativeName>
        <fullName evidence="1">Transcriptase subunit alpha</fullName>
    </alternativeName>
</protein>
<keyword id="KW-0240">DNA-directed RNA polymerase</keyword>
<keyword id="KW-0548">Nucleotidyltransferase</keyword>
<keyword id="KW-1185">Reference proteome</keyword>
<keyword id="KW-0804">Transcription</keyword>
<keyword id="KW-0808">Transferase</keyword>
<sequence length="312" mass="34161">MLQYQIDRIEHQITDDRSQTGVFLIGPLERGQATTLGNSLRRMLMGNLAGTAVTAVRIAGVNHEYATIPGVREDVLDILLNCKQLTVTSRTDELEIGRLIVSGPAVVKAKDLQFSSQVQVVDGERPIATVSEGHSLELEVHVERGVGYRPVDRHNEDTSAIDLLQIDAVFMPVHRVNFTTDETAVAEGGSARERLRMEVVTDGSMTPDDAIAQAANQLIELFQPLATVTMVEEPGIEPEPSAEAQIPLEELNLSVRAYNCLKRAQVNSVSDLMGFSYEDLLEIKNFGSKSADEVIEALERIGISIPQSRTSV</sequence>
<organism>
    <name type="scientific">Synechococcus sp. (strain CC9311)</name>
    <dbReference type="NCBI Taxonomy" id="64471"/>
    <lineage>
        <taxon>Bacteria</taxon>
        <taxon>Bacillati</taxon>
        <taxon>Cyanobacteriota</taxon>
        <taxon>Cyanophyceae</taxon>
        <taxon>Synechococcales</taxon>
        <taxon>Synechococcaceae</taxon>
        <taxon>Synechococcus</taxon>
    </lineage>
</organism>
<feature type="chain" id="PRO_0000264557" description="DNA-directed RNA polymerase subunit alpha">
    <location>
        <begin position="1"/>
        <end position="312"/>
    </location>
</feature>
<feature type="region of interest" description="Alpha N-terminal domain (alpha-NTD)" evidence="1">
    <location>
        <begin position="1"/>
        <end position="229"/>
    </location>
</feature>
<feature type="region of interest" description="Alpha C-terminal domain (alpha-CTD)" evidence="1">
    <location>
        <begin position="236"/>
        <end position="312"/>
    </location>
</feature>
<accession>Q0ID28</accession>
<proteinExistence type="inferred from homology"/>
<evidence type="ECO:0000255" key="1">
    <source>
        <dbReference type="HAMAP-Rule" id="MF_00059"/>
    </source>
</evidence>
<gene>
    <name evidence="1" type="primary">rpoA</name>
    <name type="ordered locus">sync_0414</name>
</gene>
<reference key="1">
    <citation type="journal article" date="2006" name="Proc. Natl. Acad. Sci. U.S.A.">
        <title>Genome sequence of Synechococcus CC9311: insights into adaptation to a coastal environment.</title>
        <authorList>
            <person name="Palenik B."/>
            <person name="Ren Q."/>
            <person name="Dupont C.L."/>
            <person name="Myers G.S."/>
            <person name="Heidelberg J.F."/>
            <person name="Badger J.H."/>
            <person name="Madupu R."/>
            <person name="Nelson W.C."/>
            <person name="Brinkac L.M."/>
            <person name="Dodson R.J."/>
            <person name="Durkin A.S."/>
            <person name="Daugherty S.C."/>
            <person name="Sullivan S.A."/>
            <person name="Khouri H."/>
            <person name="Mohamoud Y."/>
            <person name="Halpin R."/>
            <person name="Paulsen I.T."/>
        </authorList>
    </citation>
    <scope>NUCLEOTIDE SEQUENCE [LARGE SCALE GENOMIC DNA]</scope>
    <source>
        <strain>CC9311</strain>
    </source>
</reference>